<sequence length="95" mass="10912">MNKYETLFILNPSLDEEGINTNVEKFKSVITNGGGEVENVDLWGKRKLAYEIDKVNEGIYVLVNFQSDAQLPKELDRVFRISDSIIRHLIISLEK</sequence>
<name>RS6_CLOAB</name>
<proteinExistence type="inferred from homology"/>
<feature type="chain" id="PRO_0000176755" description="Small ribosomal subunit protein bS6">
    <location>
        <begin position="1"/>
        <end position="95"/>
    </location>
</feature>
<reference key="1">
    <citation type="journal article" date="2001" name="J. Bacteriol.">
        <title>Genome sequence and comparative analysis of the solvent-producing bacterium Clostridium acetobutylicum.</title>
        <authorList>
            <person name="Noelling J."/>
            <person name="Breton G."/>
            <person name="Omelchenko M.V."/>
            <person name="Makarova K.S."/>
            <person name="Zeng Q."/>
            <person name="Gibson R."/>
            <person name="Lee H.M."/>
            <person name="Dubois J."/>
            <person name="Qiu D."/>
            <person name="Hitti J."/>
            <person name="Wolf Y.I."/>
            <person name="Tatusov R.L."/>
            <person name="Sabathe F."/>
            <person name="Doucette-Stamm L.A."/>
            <person name="Soucaille P."/>
            <person name="Daly M.J."/>
            <person name="Bennett G.N."/>
            <person name="Koonin E.V."/>
            <person name="Smith D.R."/>
        </authorList>
    </citation>
    <scope>NUCLEOTIDE SEQUENCE [LARGE SCALE GENOMIC DNA]</scope>
    <source>
        <strain>ATCC 824 / DSM 792 / JCM 1419 / IAM 19013 / LMG 5710 / NBRC 13948 / NRRL B-527 / VKM B-1787 / 2291 / W</strain>
    </source>
</reference>
<organism>
    <name type="scientific">Clostridium acetobutylicum (strain ATCC 824 / DSM 792 / JCM 1419 / IAM 19013 / LMG 5710 / NBRC 13948 / NRRL B-527 / VKM B-1787 / 2291 / W)</name>
    <dbReference type="NCBI Taxonomy" id="272562"/>
    <lineage>
        <taxon>Bacteria</taxon>
        <taxon>Bacillati</taxon>
        <taxon>Bacillota</taxon>
        <taxon>Clostridia</taxon>
        <taxon>Eubacteriales</taxon>
        <taxon>Clostridiaceae</taxon>
        <taxon>Clostridium</taxon>
    </lineage>
</organism>
<comment type="function">
    <text evidence="1">Binds together with bS18 to 16S ribosomal RNA.</text>
</comment>
<comment type="similarity">
    <text evidence="1">Belongs to the bacterial ribosomal protein bS6 family.</text>
</comment>
<dbReference type="EMBL" id="AE001437">
    <property type="protein sequence ID" value="AAK81644.1"/>
    <property type="molecule type" value="Genomic_DNA"/>
</dbReference>
<dbReference type="PIR" id="A97357">
    <property type="entry name" value="A97357"/>
</dbReference>
<dbReference type="RefSeq" id="NP_350304.1">
    <property type="nucleotide sequence ID" value="NC_003030.1"/>
</dbReference>
<dbReference type="RefSeq" id="WP_010966984.1">
    <property type="nucleotide sequence ID" value="NC_003030.1"/>
</dbReference>
<dbReference type="SMR" id="Q97CX2"/>
<dbReference type="STRING" id="272562.CA_C3724"/>
<dbReference type="GeneID" id="45000220"/>
<dbReference type="KEGG" id="cac:CA_C3724"/>
<dbReference type="PATRIC" id="fig|272562.8.peg.3913"/>
<dbReference type="eggNOG" id="COG0360">
    <property type="taxonomic scope" value="Bacteria"/>
</dbReference>
<dbReference type="HOGENOM" id="CLU_113441_5_1_9"/>
<dbReference type="OrthoDB" id="9812702at2"/>
<dbReference type="Proteomes" id="UP000000814">
    <property type="component" value="Chromosome"/>
</dbReference>
<dbReference type="GO" id="GO:0005737">
    <property type="term" value="C:cytoplasm"/>
    <property type="evidence" value="ECO:0007669"/>
    <property type="project" value="UniProtKB-ARBA"/>
</dbReference>
<dbReference type="GO" id="GO:1990904">
    <property type="term" value="C:ribonucleoprotein complex"/>
    <property type="evidence" value="ECO:0007669"/>
    <property type="project" value="UniProtKB-KW"/>
</dbReference>
<dbReference type="GO" id="GO:0005840">
    <property type="term" value="C:ribosome"/>
    <property type="evidence" value="ECO:0007669"/>
    <property type="project" value="UniProtKB-KW"/>
</dbReference>
<dbReference type="GO" id="GO:0070181">
    <property type="term" value="F:small ribosomal subunit rRNA binding"/>
    <property type="evidence" value="ECO:0007669"/>
    <property type="project" value="TreeGrafter"/>
</dbReference>
<dbReference type="GO" id="GO:0003735">
    <property type="term" value="F:structural constituent of ribosome"/>
    <property type="evidence" value="ECO:0007669"/>
    <property type="project" value="InterPro"/>
</dbReference>
<dbReference type="GO" id="GO:0006412">
    <property type="term" value="P:translation"/>
    <property type="evidence" value="ECO:0007669"/>
    <property type="project" value="UniProtKB-UniRule"/>
</dbReference>
<dbReference type="CDD" id="cd00473">
    <property type="entry name" value="bS6"/>
    <property type="match status" value="1"/>
</dbReference>
<dbReference type="FunFam" id="3.30.70.60:FF:000002">
    <property type="entry name" value="30S ribosomal protein S6"/>
    <property type="match status" value="1"/>
</dbReference>
<dbReference type="Gene3D" id="3.30.70.60">
    <property type="match status" value="1"/>
</dbReference>
<dbReference type="HAMAP" id="MF_00360">
    <property type="entry name" value="Ribosomal_bS6"/>
    <property type="match status" value="1"/>
</dbReference>
<dbReference type="InterPro" id="IPR000529">
    <property type="entry name" value="Ribosomal_bS6"/>
</dbReference>
<dbReference type="InterPro" id="IPR035980">
    <property type="entry name" value="Ribosomal_bS6_sf"/>
</dbReference>
<dbReference type="InterPro" id="IPR020814">
    <property type="entry name" value="Ribosomal_S6_plastid/chlpt"/>
</dbReference>
<dbReference type="InterPro" id="IPR014717">
    <property type="entry name" value="Transl_elong_EF1B/ribsomal_bS6"/>
</dbReference>
<dbReference type="NCBIfam" id="TIGR00166">
    <property type="entry name" value="S6"/>
    <property type="match status" value="1"/>
</dbReference>
<dbReference type="PANTHER" id="PTHR21011">
    <property type="entry name" value="MITOCHONDRIAL 28S RIBOSOMAL PROTEIN S6"/>
    <property type="match status" value="1"/>
</dbReference>
<dbReference type="PANTHER" id="PTHR21011:SF1">
    <property type="entry name" value="SMALL RIBOSOMAL SUBUNIT PROTEIN BS6M"/>
    <property type="match status" value="1"/>
</dbReference>
<dbReference type="Pfam" id="PF01250">
    <property type="entry name" value="Ribosomal_S6"/>
    <property type="match status" value="1"/>
</dbReference>
<dbReference type="SUPFAM" id="SSF54995">
    <property type="entry name" value="Ribosomal protein S6"/>
    <property type="match status" value="1"/>
</dbReference>
<protein>
    <recommendedName>
        <fullName evidence="1">Small ribosomal subunit protein bS6</fullName>
    </recommendedName>
    <alternativeName>
        <fullName evidence="2">30S ribosomal protein S6</fullName>
    </alternativeName>
</protein>
<evidence type="ECO:0000255" key="1">
    <source>
        <dbReference type="HAMAP-Rule" id="MF_00360"/>
    </source>
</evidence>
<evidence type="ECO:0000305" key="2"/>
<keyword id="KW-1185">Reference proteome</keyword>
<keyword id="KW-0687">Ribonucleoprotein</keyword>
<keyword id="KW-0689">Ribosomal protein</keyword>
<keyword id="KW-0694">RNA-binding</keyword>
<keyword id="KW-0699">rRNA-binding</keyword>
<gene>
    <name evidence="1" type="primary">rpsF</name>
    <name type="ordered locus">CA_C3724</name>
</gene>
<accession>Q97CX2</accession>